<sequence>MYAIIKTGGKQLKVEAGQTIYVEKLDAKEGDKVTFDKVVFVGGDKTVIGTPFVEGATVEATVEKQGRAKKVVTFKYKPKKHQHTKQGHRQPYTKVVIDAINA</sequence>
<reference key="1">
    <citation type="journal article" date="2006" name="Proc. Natl. Acad. Sci. U.S.A.">
        <title>Multireplicon genome architecture of Lactobacillus salivarius.</title>
        <authorList>
            <person name="Claesson M.J."/>
            <person name="Li Y."/>
            <person name="Leahy S."/>
            <person name="Canchaya C."/>
            <person name="van Pijkeren J.P."/>
            <person name="Cerdeno-Tarraga A.M."/>
            <person name="Parkhill J."/>
            <person name="Flynn S."/>
            <person name="O'Sullivan G.C."/>
            <person name="Collins J.K."/>
            <person name="Higgins D."/>
            <person name="Shanahan F."/>
            <person name="Fitzgerald G.F."/>
            <person name="van Sinderen D."/>
            <person name="O'Toole P.W."/>
        </authorList>
    </citation>
    <scope>NUCLEOTIDE SEQUENCE [LARGE SCALE GENOMIC DNA]</scope>
    <source>
        <strain>UCC118</strain>
    </source>
</reference>
<evidence type="ECO:0000255" key="1">
    <source>
        <dbReference type="HAMAP-Rule" id="MF_01363"/>
    </source>
</evidence>
<evidence type="ECO:0000305" key="2"/>
<gene>
    <name evidence="1" type="primary">rplU</name>
    <name type="ordered locus">LSL_0956</name>
</gene>
<proteinExistence type="inferred from homology"/>
<protein>
    <recommendedName>
        <fullName evidence="1">Large ribosomal subunit protein bL21</fullName>
    </recommendedName>
    <alternativeName>
        <fullName evidence="2">50S ribosomal protein L21</fullName>
    </alternativeName>
</protein>
<name>RL21_LIGS1</name>
<keyword id="KW-1185">Reference proteome</keyword>
<keyword id="KW-0687">Ribonucleoprotein</keyword>
<keyword id="KW-0689">Ribosomal protein</keyword>
<keyword id="KW-0694">RNA-binding</keyword>
<keyword id="KW-0699">rRNA-binding</keyword>
<comment type="function">
    <text evidence="1">This protein binds to 23S rRNA in the presence of protein L20.</text>
</comment>
<comment type="subunit">
    <text evidence="1">Part of the 50S ribosomal subunit. Contacts protein L20.</text>
</comment>
<comment type="similarity">
    <text evidence="1">Belongs to the bacterial ribosomal protein bL21 family.</text>
</comment>
<organism>
    <name type="scientific">Ligilactobacillus salivarius (strain UCC118)</name>
    <name type="common">Lactobacillus salivarius</name>
    <dbReference type="NCBI Taxonomy" id="362948"/>
    <lineage>
        <taxon>Bacteria</taxon>
        <taxon>Bacillati</taxon>
        <taxon>Bacillota</taxon>
        <taxon>Bacilli</taxon>
        <taxon>Lactobacillales</taxon>
        <taxon>Lactobacillaceae</taxon>
        <taxon>Ligilactobacillus</taxon>
    </lineage>
</organism>
<accession>Q1WTI0</accession>
<dbReference type="EMBL" id="CP000233">
    <property type="protein sequence ID" value="ABD99766.1"/>
    <property type="molecule type" value="Genomic_DNA"/>
</dbReference>
<dbReference type="RefSeq" id="WP_003700335.1">
    <property type="nucleotide sequence ID" value="NC_007929.1"/>
</dbReference>
<dbReference type="RefSeq" id="YP_535849.1">
    <property type="nucleotide sequence ID" value="NC_007929.1"/>
</dbReference>
<dbReference type="SMR" id="Q1WTI0"/>
<dbReference type="STRING" id="362948.LSL_0956"/>
<dbReference type="GeneID" id="89465723"/>
<dbReference type="KEGG" id="lsl:LSL_0956"/>
<dbReference type="PATRIC" id="fig|362948.14.peg.1031"/>
<dbReference type="HOGENOM" id="CLU_061463_3_1_9"/>
<dbReference type="OrthoDB" id="9813334at2"/>
<dbReference type="Proteomes" id="UP000006559">
    <property type="component" value="Chromosome"/>
</dbReference>
<dbReference type="GO" id="GO:0005737">
    <property type="term" value="C:cytoplasm"/>
    <property type="evidence" value="ECO:0007669"/>
    <property type="project" value="UniProtKB-ARBA"/>
</dbReference>
<dbReference type="GO" id="GO:1990904">
    <property type="term" value="C:ribonucleoprotein complex"/>
    <property type="evidence" value="ECO:0007669"/>
    <property type="project" value="UniProtKB-KW"/>
</dbReference>
<dbReference type="GO" id="GO:0005840">
    <property type="term" value="C:ribosome"/>
    <property type="evidence" value="ECO:0007669"/>
    <property type="project" value="UniProtKB-KW"/>
</dbReference>
<dbReference type="GO" id="GO:0019843">
    <property type="term" value="F:rRNA binding"/>
    <property type="evidence" value="ECO:0007669"/>
    <property type="project" value="UniProtKB-UniRule"/>
</dbReference>
<dbReference type="GO" id="GO:0003735">
    <property type="term" value="F:structural constituent of ribosome"/>
    <property type="evidence" value="ECO:0007669"/>
    <property type="project" value="InterPro"/>
</dbReference>
<dbReference type="GO" id="GO:0006412">
    <property type="term" value="P:translation"/>
    <property type="evidence" value="ECO:0007669"/>
    <property type="project" value="UniProtKB-UniRule"/>
</dbReference>
<dbReference type="HAMAP" id="MF_01363">
    <property type="entry name" value="Ribosomal_bL21"/>
    <property type="match status" value="1"/>
</dbReference>
<dbReference type="InterPro" id="IPR028909">
    <property type="entry name" value="bL21-like"/>
</dbReference>
<dbReference type="InterPro" id="IPR036164">
    <property type="entry name" value="bL21-like_sf"/>
</dbReference>
<dbReference type="InterPro" id="IPR001787">
    <property type="entry name" value="Ribosomal_bL21"/>
</dbReference>
<dbReference type="InterPro" id="IPR018258">
    <property type="entry name" value="Ribosomal_bL21_CS"/>
</dbReference>
<dbReference type="NCBIfam" id="TIGR00061">
    <property type="entry name" value="L21"/>
    <property type="match status" value="1"/>
</dbReference>
<dbReference type="PANTHER" id="PTHR21349">
    <property type="entry name" value="50S RIBOSOMAL PROTEIN L21"/>
    <property type="match status" value="1"/>
</dbReference>
<dbReference type="PANTHER" id="PTHR21349:SF0">
    <property type="entry name" value="LARGE RIBOSOMAL SUBUNIT PROTEIN BL21M"/>
    <property type="match status" value="1"/>
</dbReference>
<dbReference type="Pfam" id="PF00829">
    <property type="entry name" value="Ribosomal_L21p"/>
    <property type="match status" value="1"/>
</dbReference>
<dbReference type="SUPFAM" id="SSF141091">
    <property type="entry name" value="L21p-like"/>
    <property type="match status" value="1"/>
</dbReference>
<dbReference type="PROSITE" id="PS01169">
    <property type="entry name" value="RIBOSOMAL_L21"/>
    <property type="match status" value="1"/>
</dbReference>
<feature type="chain" id="PRO_0000269332" description="Large ribosomal subunit protein bL21">
    <location>
        <begin position="1"/>
        <end position="102"/>
    </location>
</feature>